<dbReference type="EMBL" id="AE014134">
    <property type="protein sequence ID" value="AAF52190.2"/>
    <property type="molecule type" value="Genomic_DNA"/>
</dbReference>
<dbReference type="EMBL" id="BT004850">
    <property type="protein sequence ID" value="AAO45206.1"/>
    <property type="molecule type" value="mRNA"/>
</dbReference>
<dbReference type="RefSeq" id="NP_608889.1">
    <property type="nucleotide sequence ID" value="NM_135045.3"/>
</dbReference>
<dbReference type="SMR" id="Q9VMW8"/>
<dbReference type="BioGRID" id="59901">
    <property type="interactions" value="12"/>
</dbReference>
<dbReference type="DIP" id="DIP-17743N"/>
<dbReference type="FunCoup" id="Q9VMW8">
    <property type="interactions" value="781"/>
</dbReference>
<dbReference type="IntAct" id="Q9VMW8">
    <property type="interactions" value="4"/>
</dbReference>
<dbReference type="STRING" id="7227.FBpp0078636"/>
<dbReference type="PaxDb" id="7227-FBpp0078636"/>
<dbReference type="DNASU" id="33717"/>
<dbReference type="EnsemblMetazoa" id="FBtr0078997">
    <property type="protein sequence ID" value="FBpp0078636"/>
    <property type="gene ID" value="FBgn0031662"/>
</dbReference>
<dbReference type="GeneID" id="33717"/>
<dbReference type="KEGG" id="dme:Dmel_CG3792"/>
<dbReference type="UCSC" id="CG3792-RA">
    <property type="organism name" value="d. melanogaster"/>
</dbReference>
<dbReference type="AGR" id="FB:FBgn0031662"/>
<dbReference type="FlyBase" id="FBgn0031662">
    <property type="gene designation" value="CG3792"/>
</dbReference>
<dbReference type="VEuPathDB" id="VectorBase:FBgn0031662"/>
<dbReference type="eggNOG" id="KOG3211">
    <property type="taxonomic scope" value="Eukaryota"/>
</dbReference>
<dbReference type="GeneTree" id="ENSGT00940000153916"/>
<dbReference type="HOGENOM" id="CLU_053568_2_0_1"/>
<dbReference type="InParanoid" id="Q9VMW8"/>
<dbReference type="OMA" id="LQVLYYW"/>
<dbReference type="OrthoDB" id="271506at2759"/>
<dbReference type="PhylomeDB" id="Q9VMW8"/>
<dbReference type="Reactome" id="R-DME-446193">
    <property type="pathway name" value="Biosynthesis of the N-glycan precursor (dolichol lipid-linked oligosaccharide, LLO) and transfer to a nascent protein"/>
</dbReference>
<dbReference type="BioGRID-ORCS" id="33717">
    <property type="hits" value="0 hits in 1 CRISPR screen"/>
</dbReference>
<dbReference type="GenomeRNAi" id="33717"/>
<dbReference type="PRO" id="PR:Q9VMW8"/>
<dbReference type="Proteomes" id="UP000000803">
    <property type="component" value="Chromosome 2L"/>
</dbReference>
<dbReference type="Bgee" id="FBgn0031662">
    <property type="expression patterns" value="Expressed in embryonic/larval hemocyte (Drosophila) and 117 other cell types or tissues"/>
</dbReference>
<dbReference type="GO" id="GO:0016020">
    <property type="term" value="C:membrane"/>
    <property type="evidence" value="ECO:0000255"/>
    <property type="project" value="FlyBase"/>
</dbReference>
<dbReference type="GO" id="GO:0009312">
    <property type="term" value="P:oligosaccharide biosynthetic process"/>
    <property type="evidence" value="ECO:0000250"/>
    <property type="project" value="FlyBase"/>
</dbReference>
<dbReference type="FunFam" id="1.20.1280.290:FF:000031">
    <property type="entry name" value="Mannose-P-dolichol utilization defect 1"/>
    <property type="match status" value="1"/>
</dbReference>
<dbReference type="FunFam" id="1.20.1280.290:FF:000006">
    <property type="entry name" value="mannose-P-dolichol utilization defect 1 protein"/>
    <property type="match status" value="1"/>
</dbReference>
<dbReference type="Gene3D" id="1.20.1280.290">
    <property type="match status" value="2"/>
</dbReference>
<dbReference type="InterPro" id="IPR016817">
    <property type="entry name" value="MannP-dilichol_defect-1"/>
</dbReference>
<dbReference type="InterPro" id="IPR006603">
    <property type="entry name" value="PQ-loop_rpt"/>
</dbReference>
<dbReference type="PANTHER" id="PTHR12226">
    <property type="entry name" value="MANNOSE-P-DOLICHOL UTILIZATION DEFECT 1 LEC35 -RELATED"/>
    <property type="match status" value="1"/>
</dbReference>
<dbReference type="PANTHER" id="PTHR12226:SF2">
    <property type="entry name" value="MANNOSE-P-DOLICHOL UTILIZATION DEFECT 1 PROTEIN"/>
    <property type="match status" value="1"/>
</dbReference>
<dbReference type="Pfam" id="PF04193">
    <property type="entry name" value="PQ-loop"/>
    <property type="match status" value="2"/>
</dbReference>
<dbReference type="PIRSF" id="PIRSF023381">
    <property type="entry name" value="MannP-dilichol_defect-1p"/>
    <property type="match status" value="1"/>
</dbReference>
<dbReference type="SMART" id="SM00679">
    <property type="entry name" value="CTNS"/>
    <property type="match status" value="2"/>
</dbReference>
<proteinExistence type="evidence at transcript level"/>
<feature type="chain" id="PRO_0000221037" description="Mannose-P-dolichol utilization defect 1 protein homolog">
    <location>
        <begin position="1"/>
        <end position="252"/>
    </location>
</feature>
<feature type="transmembrane region" description="Helical" evidence="1">
    <location>
        <begin position="41"/>
        <end position="61"/>
    </location>
</feature>
<feature type="transmembrane region" description="Helical" evidence="1">
    <location>
        <begin position="69"/>
        <end position="89"/>
    </location>
</feature>
<feature type="transmembrane region" description="Helical" evidence="1">
    <location>
        <begin position="98"/>
        <end position="118"/>
    </location>
</feature>
<feature type="transmembrane region" description="Helical" evidence="1">
    <location>
        <begin position="126"/>
        <end position="146"/>
    </location>
</feature>
<feature type="transmembrane region" description="Helical" evidence="1">
    <location>
        <begin position="148"/>
        <end position="168"/>
    </location>
</feature>
<feature type="transmembrane region" description="Helical" evidence="1">
    <location>
        <begin position="180"/>
        <end position="200"/>
    </location>
</feature>
<feature type="transmembrane region" description="Helical" evidence="1">
    <location>
        <begin position="207"/>
        <end position="227"/>
    </location>
</feature>
<feature type="domain" description="PQ-loop 1">
    <location>
        <begin position="34"/>
        <end position="100"/>
    </location>
</feature>
<feature type="domain" description="PQ-loop 2">
    <location>
        <begin position="157"/>
        <end position="211"/>
    </location>
</feature>
<protein>
    <recommendedName>
        <fullName>Mannose-P-dolichol utilization defect 1 protein homolog</fullName>
    </recommendedName>
</protein>
<sequence>MTDLIRQGALFLMSEKCYDNYFLYHNFLDVPCFKALLSKGLGLAIIAGSVLVKVPQVLKILNSKSGEGINIVGVVLDLLAISFHLSYNFMHGYPFSAWGDSTFLAIQTVTIAVLVLFFNGRKAQSGLFLVGYVVLMYVLNSGLTPMSVLFTIQSCNIPILLVGKLSQAYTNYQAGSTGQLSAATVIMMFAGSVARIFTSIQETGDFMIILTFIASTFANSVILGQLIYYWNKPAGVKVKDSKAKKPKTKKDD</sequence>
<comment type="subcellular location">
    <subcellularLocation>
        <location evidence="2">Membrane</location>
        <topology evidence="2">Multi-pass membrane protein</topology>
    </subcellularLocation>
</comment>
<comment type="similarity">
    <text evidence="2">Belongs to the MPDU1 (TC 2.A.43.3) family.</text>
</comment>
<name>MPU1_DROME</name>
<evidence type="ECO:0000255" key="1"/>
<evidence type="ECO:0000305" key="2"/>
<organism>
    <name type="scientific">Drosophila melanogaster</name>
    <name type="common">Fruit fly</name>
    <dbReference type="NCBI Taxonomy" id="7227"/>
    <lineage>
        <taxon>Eukaryota</taxon>
        <taxon>Metazoa</taxon>
        <taxon>Ecdysozoa</taxon>
        <taxon>Arthropoda</taxon>
        <taxon>Hexapoda</taxon>
        <taxon>Insecta</taxon>
        <taxon>Pterygota</taxon>
        <taxon>Neoptera</taxon>
        <taxon>Endopterygota</taxon>
        <taxon>Diptera</taxon>
        <taxon>Brachycera</taxon>
        <taxon>Muscomorpha</taxon>
        <taxon>Ephydroidea</taxon>
        <taxon>Drosophilidae</taxon>
        <taxon>Drosophila</taxon>
        <taxon>Sophophora</taxon>
    </lineage>
</organism>
<reference key="1">
    <citation type="journal article" date="2000" name="Science">
        <title>The genome sequence of Drosophila melanogaster.</title>
        <authorList>
            <person name="Adams M.D."/>
            <person name="Celniker S.E."/>
            <person name="Holt R.A."/>
            <person name="Evans C.A."/>
            <person name="Gocayne J.D."/>
            <person name="Amanatides P.G."/>
            <person name="Scherer S.E."/>
            <person name="Li P.W."/>
            <person name="Hoskins R.A."/>
            <person name="Galle R.F."/>
            <person name="George R.A."/>
            <person name="Lewis S.E."/>
            <person name="Richards S."/>
            <person name="Ashburner M."/>
            <person name="Henderson S.N."/>
            <person name="Sutton G.G."/>
            <person name="Wortman J.R."/>
            <person name="Yandell M.D."/>
            <person name="Zhang Q."/>
            <person name="Chen L.X."/>
            <person name="Brandon R.C."/>
            <person name="Rogers Y.-H.C."/>
            <person name="Blazej R.G."/>
            <person name="Champe M."/>
            <person name="Pfeiffer B.D."/>
            <person name="Wan K.H."/>
            <person name="Doyle C."/>
            <person name="Baxter E.G."/>
            <person name="Helt G."/>
            <person name="Nelson C.R."/>
            <person name="Miklos G.L.G."/>
            <person name="Abril J.F."/>
            <person name="Agbayani A."/>
            <person name="An H.-J."/>
            <person name="Andrews-Pfannkoch C."/>
            <person name="Baldwin D."/>
            <person name="Ballew R.M."/>
            <person name="Basu A."/>
            <person name="Baxendale J."/>
            <person name="Bayraktaroglu L."/>
            <person name="Beasley E.M."/>
            <person name="Beeson K.Y."/>
            <person name="Benos P.V."/>
            <person name="Berman B.P."/>
            <person name="Bhandari D."/>
            <person name="Bolshakov S."/>
            <person name="Borkova D."/>
            <person name="Botchan M.R."/>
            <person name="Bouck J."/>
            <person name="Brokstein P."/>
            <person name="Brottier P."/>
            <person name="Burtis K.C."/>
            <person name="Busam D.A."/>
            <person name="Butler H."/>
            <person name="Cadieu E."/>
            <person name="Center A."/>
            <person name="Chandra I."/>
            <person name="Cherry J.M."/>
            <person name="Cawley S."/>
            <person name="Dahlke C."/>
            <person name="Davenport L.B."/>
            <person name="Davies P."/>
            <person name="de Pablos B."/>
            <person name="Delcher A."/>
            <person name="Deng Z."/>
            <person name="Mays A.D."/>
            <person name="Dew I."/>
            <person name="Dietz S.M."/>
            <person name="Dodson K."/>
            <person name="Doup L.E."/>
            <person name="Downes M."/>
            <person name="Dugan-Rocha S."/>
            <person name="Dunkov B.C."/>
            <person name="Dunn P."/>
            <person name="Durbin K.J."/>
            <person name="Evangelista C.C."/>
            <person name="Ferraz C."/>
            <person name="Ferriera S."/>
            <person name="Fleischmann W."/>
            <person name="Fosler C."/>
            <person name="Gabrielian A.E."/>
            <person name="Garg N.S."/>
            <person name="Gelbart W.M."/>
            <person name="Glasser K."/>
            <person name="Glodek A."/>
            <person name="Gong F."/>
            <person name="Gorrell J.H."/>
            <person name="Gu Z."/>
            <person name="Guan P."/>
            <person name="Harris M."/>
            <person name="Harris N.L."/>
            <person name="Harvey D.A."/>
            <person name="Heiman T.J."/>
            <person name="Hernandez J.R."/>
            <person name="Houck J."/>
            <person name="Hostin D."/>
            <person name="Houston K.A."/>
            <person name="Howland T.J."/>
            <person name="Wei M.-H."/>
            <person name="Ibegwam C."/>
            <person name="Jalali M."/>
            <person name="Kalush F."/>
            <person name="Karpen G.H."/>
            <person name="Ke Z."/>
            <person name="Kennison J.A."/>
            <person name="Ketchum K.A."/>
            <person name="Kimmel B.E."/>
            <person name="Kodira C.D."/>
            <person name="Kraft C.L."/>
            <person name="Kravitz S."/>
            <person name="Kulp D."/>
            <person name="Lai Z."/>
            <person name="Lasko P."/>
            <person name="Lei Y."/>
            <person name="Levitsky A.A."/>
            <person name="Li J.H."/>
            <person name="Li Z."/>
            <person name="Liang Y."/>
            <person name="Lin X."/>
            <person name="Liu X."/>
            <person name="Mattei B."/>
            <person name="McIntosh T.C."/>
            <person name="McLeod M.P."/>
            <person name="McPherson D."/>
            <person name="Merkulov G."/>
            <person name="Milshina N.V."/>
            <person name="Mobarry C."/>
            <person name="Morris J."/>
            <person name="Moshrefi A."/>
            <person name="Mount S.M."/>
            <person name="Moy M."/>
            <person name="Murphy B."/>
            <person name="Murphy L."/>
            <person name="Muzny D.M."/>
            <person name="Nelson D.L."/>
            <person name="Nelson D.R."/>
            <person name="Nelson K.A."/>
            <person name="Nixon K."/>
            <person name="Nusskern D.R."/>
            <person name="Pacleb J.M."/>
            <person name="Palazzolo M."/>
            <person name="Pittman G.S."/>
            <person name="Pan S."/>
            <person name="Pollard J."/>
            <person name="Puri V."/>
            <person name="Reese M.G."/>
            <person name="Reinert K."/>
            <person name="Remington K."/>
            <person name="Saunders R.D.C."/>
            <person name="Scheeler F."/>
            <person name="Shen H."/>
            <person name="Shue B.C."/>
            <person name="Siden-Kiamos I."/>
            <person name="Simpson M."/>
            <person name="Skupski M.P."/>
            <person name="Smith T.J."/>
            <person name="Spier E."/>
            <person name="Spradling A.C."/>
            <person name="Stapleton M."/>
            <person name="Strong R."/>
            <person name="Sun E."/>
            <person name="Svirskas R."/>
            <person name="Tector C."/>
            <person name="Turner R."/>
            <person name="Venter E."/>
            <person name="Wang A.H."/>
            <person name="Wang X."/>
            <person name="Wang Z.-Y."/>
            <person name="Wassarman D.A."/>
            <person name="Weinstock G.M."/>
            <person name="Weissenbach J."/>
            <person name="Williams S.M."/>
            <person name="Woodage T."/>
            <person name="Worley K.C."/>
            <person name="Wu D."/>
            <person name="Yang S."/>
            <person name="Yao Q.A."/>
            <person name="Ye J."/>
            <person name="Yeh R.-F."/>
            <person name="Zaveri J.S."/>
            <person name="Zhan M."/>
            <person name="Zhang G."/>
            <person name="Zhao Q."/>
            <person name="Zheng L."/>
            <person name="Zheng X.H."/>
            <person name="Zhong F.N."/>
            <person name="Zhong W."/>
            <person name="Zhou X."/>
            <person name="Zhu S.C."/>
            <person name="Zhu X."/>
            <person name="Smith H.O."/>
            <person name="Gibbs R.A."/>
            <person name="Myers E.W."/>
            <person name="Rubin G.M."/>
            <person name="Venter J.C."/>
        </authorList>
    </citation>
    <scope>NUCLEOTIDE SEQUENCE [LARGE SCALE GENOMIC DNA]</scope>
    <source>
        <strain>Berkeley</strain>
    </source>
</reference>
<reference key="2">
    <citation type="journal article" date="2002" name="Genome Biol.">
        <title>Annotation of the Drosophila melanogaster euchromatic genome: a systematic review.</title>
        <authorList>
            <person name="Misra S."/>
            <person name="Crosby M.A."/>
            <person name="Mungall C.J."/>
            <person name="Matthews B.B."/>
            <person name="Campbell K.S."/>
            <person name="Hradecky P."/>
            <person name="Huang Y."/>
            <person name="Kaminker J.S."/>
            <person name="Millburn G.H."/>
            <person name="Prochnik S.E."/>
            <person name="Smith C.D."/>
            <person name="Tupy J.L."/>
            <person name="Whitfield E.J."/>
            <person name="Bayraktaroglu L."/>
            <person name="Berman B.P."/>
            <person name="Bettencourt B.R."/>
            <person name="Celniker S.E."/>
            <person name="de Grey A.D.N.J."/>
            <person name="Drysdale R.A."/>
            <person name="Harris N.L."/>
            <person name="Richter J."/>
            <person name="Russo S."/>
            <person name="Schroeder A.J."/>
            <person name="Shu S.Q."/>
            <person name="Stapleton M."/>
            <person name="Yamada C."/>
            <person name="Ashburner M."/>
            <person name="Gelbart W.M."/>
            <person name="Rubin G.M."/>
            <person name="Lewis S.E."/>
        </authorList>
    </citation>
    <scope>GENOME REANNOTATION</scope>
    <source>
        <strain>Berkeley</strain>
    </source>
</reference>
<reference key="3">
    <citation type="submission" date="2003-02" db="EMBL/GenBank/DDBJ databases">
        <authorList>
            <person name="Stapleton M."/>
            <person name="Brokstein P."/>
            <person name="Hong L."/>
            <person name="Agbayani A."/>
            <person name="Carlson J.W."/>
            <person name="Champe M."/>
            <person name="Chavez C."/>
            <person name="Dorsett V."/>
            <person name="Dresnek D."/>
            <person name="Farfan D."/>
            <person name="Frise E."/>
            <person name="George R.A."/>
            <person name="Gonzalez M."/>
            <person name="Guarin H."/>
            <person name="Kronmiller B."/>
            <person name="Li P.W."/>
            <person name="Liao G."/>
            <person name="Miranda A."/>
            <person name="Mungall C.J."/>
            <person name="Nunoo J."/>
            <person name="Pacleb J.M."/>
            <person name="Paragas V."/>
            <person name="Park S."/>
            <person name="Patel S."/>
            <person name="Phouanenavong S."/>
            <person name="Wan K.H."/>
            <person name="Yu C."/>
            <person name="Lewis S.E."/>
            <person name="Rubin G.M."/>
            <person name="Celniker S.E."/>
        </authorList>
    </citation>
    <scope>NUCLEOTIDE SEQUENCE [LARGE SCALE MRNA]</scope>
    <source>
        <strain>Berkeley</strain>
        <tissue>Embryo</tissue>
    </source>
</reference>
<accession>Q9VMW8</accession>
<gene>
    <name type="ORF">CG3792</name>
</gene>
<keyword id="KW-0472">Membrane</keyword>
<keyword id="KW-1185">Reference proteome</keyword>
<keyword id="KW-0677">Repeat</keyword>
<keyword id="KW-0812">Transmembrane</keyword>
<keyword id="KW-1133">Transmembrane helix</keyword>
<keyword id="KW-0813">Transport</keyword>